<keyword id="KW-0328">Glycosyltransferase</keyword>
<keyword id="KW-0460">Magnesium</keyword>
<keyword id="KW-0479">Metal-binding</keyword>
<keyword id="KW-0808">Transferase</keyword>
<comment type="function">
    <text evidence="1 2">Catalyzes the transfer of a N-acetyl-glucosamine moiety to 1D-myo-inositol 3-phosphate to produce 1D-myo-inositol 2-acetamido-2-deoxy-glucopyranoside 3-phosphate in the mycothiol (MSH) biosynthesis pathway (By similarity). MSH and WhiB3 are probably part of a regulatory circuit that mediates gene expression upon acid stress (like that found in host macrophage phagosomes). MSH is one of the major redox buffers which protects bacteria against redox stressors and antibiotics; loss of MSH or ergothioneine (ERG, the other major redox buffer in this bacteria) leads to respiratory alterations and bioenergetic deficiencies that negatively impact virulence (By similarity).</text>
</comment>
<comment type="catalytic activity">
    <reaction evidence="2">
        <text>1D-myo-inositol 3-phosphate + UDP-N-acetyl-alpha-D-glucosamine = 1D-myo-inositol 2-acetamido-2-deoxy-alpha-D-glucopyranoside 3-phosphate + UDP + H(+)</text>
        <dbReference type="Rhea" id="RHEA:26188"/>
        <dbReference type="ChEBI" id="CHEBI:15378"/>
        <dbReference type="ChEBI" id="CHEBI:57705"/>
        <dbReference type="ChEBI" id="CHEBI:58223"/>
        <dbReference type="ChEBI" id="CHEBI:58401"/>
        <dbReference type="ChEBI" id="CHEBI:58892"/>
        <dbReference type="EC" id="2.4.1.250"/>
    </reaction>
</comment>
<comment type="subunit">
    <text evidence="2">Homodimer.</text>
</comment>
<comment type="similarity">
    <text evidence="2">Belongs to the glycosyltransferase group 1 family. MshA subfamily.</text>
</comment>
<organism>
    <name type="scientific">Mycobacterium tuberculosis (strain F11)</name>
    <dbReference type="NCBI Taxonomy" id="336982"/>
    <lineage>
        <taxon>Bacteria</taxon>
        <taxon>Bacillati</taxon>
        <taxon>Actinomycetota</taxon>
        <taxon>Actinomycetes</taxon>
        <taxon>Mycobacteriales</taxon>
        <taxon>Mycobacteriaceae</taxon>
        <taxon>Mycobacterium</taxon>
        <taxon>Mycobacterium tuberculosis complex</taxon>
    </lineage>
</organism>
<evidence type="ECO:0000250" key="1">
    <source>
        <dbReference type="UniProtKB" id="P9WMY7"/>
    </source>
</evidence>
<evidence type="ECO:0000255" key="2">
    <source>
        <dbReference type="HAMAP-Rule" id="MF_01695"/>
    </source>
</evidence>
<evidence type="ECO:0000256" key="3">
    <source>
        <dbReference type="SAM" id="MobiDB-lite"/>
    </source>
</evidence>
<proteinExistence type="inferred from homology"/>
<gene>
    <name evidence="2" type="primary">mshA</name>
    <name type="ordered locus">TBFG_10494</name>
</gene>
<feature type="chain" id="PRO_0000400142" description="D-inositol 3-phosphate glycosyltransferase">
    <location>
        <begin position="1"/>
        <end position="480"/>
    </location>
</feature>
<feature type="region of interest" description="Disordered" evidence="3">
    <location>
        <begin position="1"/>
        <end position="42"/>
    </location>
</feature>
<feature type="binding site" evidence="2">
    <location>
        <position position="53"/>
    </location>
    <ligand>
        <name>1D-myo-inositol 3-phosphate</name>
        <dbReference type="ChEBI" id="CHEBI:58401"/>
    </ligand>
</feature>
<feature type="binding site" evidence="2">
    <location>
        <begin position="59"/>
        <end position="60"/>
    </location>
    <ligand>
        <name>UDP-N-acetyl-alpha-D-glucosamine</name>
        <dbReference type="ChEBI" id="CHEBI:57705"/>
    </ligand>
</feature>
<feature type="binding site" evidence="2">
    <location>
        <begin position="64"/>
        <end position="69"/>
    </location>
    <ligand>
        <name>1D-myo-inositol 3-phosphate</name>
        <dbReference type="ChEBI" id="CHEBI:58401"/>
    </ligand>
</feature>
<feature type="binding site" evidence="2">
    <location>
        <position position="67"/>
    </location>
    <ligand>
        <name>UDP-N-acetyl-alpha-D-glucosamine</name>
        <dbReference type="ChEBI" id="CHEBI:57705"/>
    </ligand>
</feature>
<feature type="binding site" evidence="2">
    <location>
        <position position="122"/>
    </location>
    <ligand>
        <name>1D-myo-inositol 3-phosphate</name>
        <dbReference type="ChEBI" id="CHEBI:58401"/>
    </ligand>
</feature>
<feature type="binding site" evidence="2">
    <location>
        <position position="155"/>
    </location>
    <ligand>
        <name>1D-myo-inositol 3-phosphate</name>
        <dbReference type="ChEBI" id="CHEBI:58401"/>
    </ligand>
</feature>
<feature type="binding site" evidence="2">
    <location>
        <position position="179"/>
    </location>
    <ligand>
        <name>1D-myo-inositol 3-phosphate</name>
        <dbReference type="ChEBI" id="CHEBI:58401"/>
    </ligand>
</feature>
<feature type="binding site" evidence="2">
    <location>
        <position position="199"/>
    </location>
    <ligand>
        <name>1D-myo-inositol 3-phosphate</name>
        <dbReference type="ChEBI" id="CHEBI:58401"/>
    </ligand>
</feature>
<feature type="binding site" evidence="2">
    <location>
        <position position="273"/>
    </location>
    <ligand>
        <name>UDP-N-acetyl-alpha-D-glucosamine</name>
        <dbReference type="ChEBI" id="CHEBI:57705"/>
    </ligand>
</feature>
<feature type="binding site" evidence="2">
    <location>
        <position position="278"/>
    </location>
    <ligand>
        <name>UDP-N-acetyl-alpha-D-glucosamine</name>
        <dbReference type="ChEBI" id="CHEBI:57705"/>
    </ligand>
</feature>
<feature type="binding site" evidence="2">
    <location>
        <position position="331"/>
    </location>
    <ligand>
        <name>UDP-N-acetyl-alpha-D-glucosamine</name>
        <dbReference type="ChEBI" id="CHEBI:57705"/>
    </ligand>
</feature>
<feature type="binding site" evidence="2">
    <location>
        <position position="340"/>
    </location>
    <ligand>
        <name>Mg(2+)</name>
        <dbReference type="ChEBI" id="CHEBI:18420"/>
    </ligand>
</feature>
<feature type="binding site" evidence="2">
    <location>
        <position position="341"/>
    </location>
    <ligand>
        <name>Mg(2+)</name>
        <dbReference type="ChEBI" id="CHEBI:18420"/>
    </ligand>
</feature>
<feature type="binding site" evidence="2">
    <location>
        <position position="343"/>
    </location>
    <ligand>
        <name>Mg(2+)</name>
        <dbReference type="ChEBI" id="CHEBI:18420"/>
    </ligand>
</feature>
<feature type="binding site" evidence="2">
    <location>
        <position position="353"/>
    </location>
    <ligand>
        <name>UDP-N-acetyl-alpha-D-glucosamine</name>
        <dbReference type="ChEBI" id="CHEBI:57705"/>
    </ligand>
</feature>
<feature type="binding site" evidence="2">
    <location>
        <position position="361"/>
    </location>
    <ligand>
        <name>UDP-N-acetyl-alpha-D-glucosamine</name>
        <dbReference type="ChEBI" id="CHEBI:57705"/>
    </ligand>
</feature>
<feature type="binding site" evidence="2">
    <location>
        <position position="367"/>
    </location>
    <ligand>
        <name>Mg(2+)</name>
        <dbReference type="ChEBI" id="CHEBI:18420"/>
    </ligand>
</feature>
<sequence>MAGVRHDDGSGLIAQRRPVRGEGATRSRGPSGPSNRNVSAADDPRRVALLAVHTSPLAQPGTGDAGGMNVYMLQSALHLARRGIEVEIFTRATASADPPVVRVAPGVLVRNVVAGPFEGLDKYDLPTQLCAFAAGVLRAEAVHEPGYYDIVHSHYWLSGQVGWLARDRWAVPLVHTAHTLAAVKNAALADGDGPEPPLRTVGEQQVVDEADRLIVNTDDEARQVISLHGADPARIDVVHPGVDLDVFRPGDRRAARAALGLPVDERVVAFVGRIQPLKAPDIVLRAAAKLPGVRIIVAGGPSGSGLASPDGLVRLADELGISARVTFLPPQSHTDLATLFRAADLVAVPSYSESFGLVAVEAQACGTPVVAAAVGGLPVAVRDGITGTLVSGHEVGQWADAIDHLLRLCAGPRGRVMSRAAARHAATFSWENTTDALLASYRRAIGEYNAERQRRGGEVISDLVAVGKPRHWTPRRGVGA</sequence>
<accession>A5WJJ8</accession>
<name>MSHA_MYCTF</name>
<dbReference type="EC" id="2.4.1.250" evidence="2"/>
<dbReference type="EMBL" id="CP000717">
    <property type="protein sequence ID" value="ABR04837.1"/>
    <property type="molecule type" value="Genomic_DNA"/>
</dbReference>
<dbReference type="RefSeq" id="WP_003402367.1">
    <property type="nucleotide sequence ID" value="NZ_KK339377.1"/>
</dbReference>
<dbReference type="SMR" id="A5WJJ8"/>
<dbReference type="CAZy" id="GT4">
    <property type="family name" value="Glycosyltransferase Family 4"/>
</dbReference>
<dbReference type="KEGG" id="mtf:TBFG_10494"/>
<dbReference type="PATRIC" id="fig|336982.11.peg.535"/>
<dbReference type="HOGENOM" id="CLU_009583_2_3_11"/>
<dbReference type="GO" id="GO:0008375">
    <property type="term" value="F:acetylglucosaminyltransferase activity"/>
    <property type="evidence" value="ECO:0007669"/>
    <property type="project" value="UniProtKB-UniRule"/>
</dbReference>
<dbReference type="GO" id="GO:0102710">
    <property type="term" value="F:D-inositol-3-phosphate glycosyltransferase activity"/>
    <property type="evidence" value="ECO:0007669"/>
    <property type="project" value="UniProtKB-EC"/>
</dbReference>
<dbReference type="GO" id="GO:0000287">
    <property type="term" value="F:magnesium ion binding"/>
    <property type="evidence" value="ECO:0007669"/>
    <property type="project" value="UniProtKB-UniRule"/>
</dbReference>
<dbReference type="GO" id="GO:0010125">
    <property type="term" value="P:mycothiol biosynthetic process"/>
    <property type="evidence" value="ECO:0007669"/>
    <property type="project" value="UniProtKB-UniRule"/>
</dbReference>
<dbReference type="CDD" id="cd03800">
    <property type="entry name" value="GT4_sucrose_synthase"/>
    <property type="match status" value="1"/>
</dbReference>
<dbReference type="FunFam" id="3.40.50.2000:FF:000265">
    <property type="entry name" value="D-inositol 3-phosphate glycosyltransferase"/>
    <property type="match status" value="1"/>
</dbReference>
<dbReference type="FunFam" id="3.40.50.2000:FF:000123">
    <property type="entry name" value="D-inositol-3-phosphate glycosyltransferase"/>
    <property type="match status" value="1"/>
</dbReference>
<dbReference type="Gene3D" id="3.40.50.2000">
    <property type="entry name" value="Glycogen Phosphorylase B"/>
    <property type="match status" value="2"/>
</dbReference>
<dbReference type="HAMAP" id="MF_01695">
    <property type="entry name" value="MshA"/>
    <property type="match status" value="1"/>
</dbReference>
<dbReference type="InterPro" id="IPR001296">
    <property type="entry name" value="Glyco_trans_1"/>
</dbReference>
<dbReference type="InterPro" id="IPR028098">
    <property type="entry name" value="Glyco_trans_4-like_N"/>
</dbReference>
<dbReference type="InterPro" id="IPR017814">
    <property type="entry name" value="Mycothiol_biosynthesis_MshA"/>
</dbReference>
<dbReference type="NCBIfam" id="TIGR03449">
    <property type="entry name" value="mycothiol_MshA"/>
    <property type="match status" value="1"/>
</dbReference>
<dbReference type="PANTHER" id="PTHR12526:SF510">
    <property type="entry name" value="D-INOSITOL 3-PHOSPHATE GLYCOSYLTRANSFERASE"/>
    <property type="match status" value="1"/>
</dbReference>
<dbReference type="PANTHER" id="PTHR12526">
    <property type="entry name" value="GLYCOSYLTRANSFERASE"/>
    <property type="match status" value="1"/>
</dbReference>
<dbReference type="Pfam" id="PF13579">
    <property type="entry name" value="Glyco_trans_4_4"/>
    <property type="match status" value="1"/>
</dbReference>
<dbReference type="Pfam" id="PF00534">
    <property type="entry name" value="Glycos_transf_1"/>
    <property type="match status" value="1"/>
</dbReference>
<dbReference type="SUPFAM" id="SSF53756">
    <property type="entry name" value="UDP-Glycosyltransferase/glycogen phosphorylase"/>
    <property type="match status" value="1"/>
</dbReference>
<reference key="1">
    <citation type="submission" date="2007-04" db="EMBL/GenBank/DDBJ databases">
        <title>The complete genome sequence of Mycobacterium tuberculosis F11.</title>
        <authorList>
            <person name="Birren B."/>
            <person name="Lander E."/>
            <person name="Galagan J."/>
            <person name="Devon K."/>
            <person name="Nusbaum C."/>
            <person name="Borowsky M.L."/>
            <person name="Grabherr M."/>
            <person name="Mauceli E."/>
            <person name="Brockman W."/>
            <person name="Young S."/>
            <person name="LaButti K."/>
            <person name="Pushparaj V."/>
            <person name="Sykes S."/>
            <person name="Baldwin J."/>
            <person name="Fitzgerald M."/>
            <person name="Bloom T."/>
            <person name="Zimmer A."/>
            <person name="Settipalli S."/>
            <person name="Shea T."/>
            <person name="Arachchi H."/>
            <person name="Macdonald P."/>
            <person name="Abouelleil A."/>
            <person name="Lui A."/>
            <person name="Priest M."/>
            <person name="Berlin A."/>
            <person name="Gearin G."/>
            <person name="Brown A."/>
            <person name="Aftuck L."/>
            <person name="Bessette D."/>
            <person name="Allen N."/>
            <person name="Lubonja R."/>
            <person name="Lokyitsang T."/>
            <person name="Matthews C."/>
            <person name="Dunbar C."/>
            <person name="Benamara M."/>
            <person name="Nguyen T."/>
            <person name="Negash T."/>
            <person name="DeCaprio D."/>
            <person name="Crawford M."/>
            <person name="Koehrsen M."/>
            <person name="Engels R."/>
            <person name="Montgomery P."/>
            <person name="Pearson M."/>
            <person name="Howarth C."/>
            <person name="Kodira C."/>
            <person name="Zeng Q."/>
            <person name="Yandava C."/>
            <person name="O'Leary S."/>
            <person name="Alvarado L."/>
            <person name="Victor T."/>
            <person name="Murray M."/>
        </authorList>
    </citation>
    <scope>NUCLEOTIDE SEQUENCE [LARGE SCALE GENOMIC DNA]</scope>
    <source>
        <strain>F11</strain>
    </source>
</reference>
<protein>
    <recommendedName>
        <fullName>D-inositol 3-phosphate glycosyltransferase</fullName>
        <ecNumber evidence="2">2.4.1.250</ecNumber>
    </recommendedName>
    <alternativeName>
        <fullName evidence="2">N-acetylglucosamine-inositol-phosphate N-acetylglucosaminyltransferase</fullName>
        <shortName evidence="2">GlcNAc-Ins-P N-acetylglucosaminyltransferase</shortName>
    </alternativeName>
</protein>